<sequence>MYISRNMEQWNEFLDLMRKAFEQGKEQELLTLLLTADERDAVALRVQIVSQLLDKSLAQREIQQILNTSAATITRGSNMIKIMPPEFMDWVKQQLNHNNKNELGSD</sequence>
<gene>
    <name evidence="1" type="primary">trpR</name>
    <name type="ordered locus">HS_1090</name>
</gene>
<keyword id="KW-0963">Cytoplasm</keyword>
<keyword id="KW-0238">DNA-binding</keyword>
<keyword id="KW-0678">Repressor</keyword>
<keyword id="KW-0804">Transcription</keyword>
<keyword id="KW-0805">Transcription regulation</keyword>
<proteinExistence type="inferred from homology"/>
<accession>Q0I456</accession>
<feature type="chain" id="PRO_1000014045" description="Trp operon repressor homolog">
    <location>
        <begin position="1"/>
        <end position="106"/>
    </location>
</feature>
<feature type="DNA-binding region" evidence="1">
    <location>
        <begin position="59"/>
        <end position="82"/>
    </location>
</feature>
<reference key="1">
    <citation type="journal article" date="2007" name="J. Bacteriol.">
        <title>Complete genome sequence of Haemophilus somnus (Histophilus somni) strain 129Pt and comparison to Haemophilus ducreyi 35000HP and Haemophilus influenzae Rd.</title>
        <authorList>
            <person name="Challacombe J.F."/>
            <person name="Duncan A.J."/>
            <person name="Brettin T.S."/>
            <person name="Bruce D."/>
            <person name="Chertkov O."/>
            <person name="Detter J.C."/>
            <person name="Han C.S."/>
            <person name="Misra M."/>
            <person name="Richardson P."/>
            <person name="Tapia R."/>
            <person name="Thayer N."/>
            <person name="Xie G."/>
            <person name="Inzana T.J."/>
        </authorList>
    </citation>
    <scope>NUCLEOTIDE SEQUENCE [LARGE SCALE GENOMIC DNA]</scope>
    <source>
        <strain>129Pt</strain>
    </source>
</reference>
<name>TRPR_HISS1</name>
<organism>
    <name type="scientific">Histophilus somni (strain 129Pt)</name>
    <name type="common">Haemophilus somnus</name>
    <dbReference type="NCBI Taxonomy" id="205914"/>
    <lineage>
        <taxon>Bacteria</taxon>
        <taxon>Pseudomonadati</taxon>
        <taxon>Pseudomonadota</taxon>
        <taxon>Gammaproteobacteria</taxon>
        <taxon>Pasteurellales</taxon>
        <taxon>Pasteurellaceae</taxon>
        <taxon>Histophilus</taxon>
    </lineage>
</organism>
<dbReference type="EMBL" id="CP000436">
    <property type="protein sequence ID" value="ABI25365.1"/>
    <property type="molecule type" value="Genomic_DNA"/>
</dbReference>
<dbReference type="SMR" id="Q0I456"/>
<dbReference type="KEGG" id="hso:HS_1090"/>
<dbReference type="eggNOG" id="COG2973">
    <property type="taxonomic scope" value="Bacteria"/>
</dbReference>
<dbReference type="HOGENOM" id="CLU_147939_0_0_6"/>
<dbReference type="GO" id="GO:0005737">
    <property type="term" value="C:cytoplasm"/>
    <property type="evidence" value="ECO:0007669"/>
    <property type="project" value="UniProtKB-SubCell"/>
</dbReference>
<dbReference type="GO" id="GO:0003700">
    <property type="term" value="F:DNA-binding transcription factor activity"/>
    <property type="evidence" value="ECO:0007669"/>
    <property type="project" value="InterPro"/>
</dbReference>
<dbReference type="GO" id="GO:0043565">
    <property type="term" value="F:sequence-specific DNA binding"/>
    <property type="evidence" value="ECO:0007669"/>
    <property type="project" value="InterPro"/>
</dbReference>
<dbReference type="GO" id="GO:0045892">
    <property type="term" value="P:negative regulation of DNA-templated transcription"/>
    <property type="evidence" value="ECO:0007669"/>
    <property type="project" value="UniProtKB-UniRule"/>
</dbReference>
<dbReference type="Gene3D" id="1.10.1270.10">
    <property type="entry name" value="TrpR-like"/>
    <property type="match status" value="1"/>
</dbReference>
<dbReference type="HAMAP" id="MF_00475">
    <property type="entry name" value="Trp_repressor"/>
    <property type="match status" value="1"/>
</dbReference>
<dbReference type="InterPro" id="IPR000831">
    <property type="entry name" value="Trp_repress"/>
</dbReference>
<dbReference type="InterPro" id="IPR013335">
    <property type="entry name" value="Trp_repress_bac"/>
</dbReference>
<dbReference type="InterPro" id="IPR010921">
    <property type="entry name" value="Trp_repressor/repl_initiator"/>
</dbReference>
<dbReference type="InterPro" id="IPR038116">
    <property type="entry name" value="TrpR-like_sf"/>
</dbReference>
<dbReference type="NCBIfam" id="TIGR01321">
    <property type="entry name" value="TrpR"/>
    <property type="match status" value="1"/>
</dbReference>
<dbReference type="PANTHER" id="PTHR38025">
    <property type="entry name" value="TRP OPERON REPRESSOR"/>
    <property type="match status" value="1"/>
</dbReference>
<dbReference type="PANTHER" id="PTHR38025:SF1">
    <property type="entry name" value="TRP OPERON REPRESSOR"/>
    <property type="match status" value="1"/>
</dbReference>
<dbReference type="Pfam" id="PF01371">
    <property type="entry name" value="Trp_repressor"/>
    <property type="match status" value="1"/>
</dbReference>
<dbReference type="PIRSF" id="PIRSF003196">
    <property type="entry name" value="Trp_repressor"/>
    <property type="match status" value="1"/>
</dbReference>
<dbReference type="SUPFAM" id="SSF48295">
    <property type="entry name" value="TrpR-like"/>
    <property type="match status" value="1"/>
</dbReference>
<comment type="function">
    <text evidence="1">This protein is an aporepressor. When complexed with L-tryptophan it binds the operator region of the trp operon and prevents the initiation of transcription.</text>
</comment>
<comment type="subunit">
    <text evidence="1">Homodimer.</text>
</comment>
<comment type="subcellular location">
    <subcellularLocation>
        <location evidence="1">Cytoplasm</location>
    </subcellularLocation>
</comment>
<comment type="similarity">
    <text evidence="1">Belongs to the TrpR family.</text>
</comment>
<evidence type="ECO:0000255" key="1">
    <source>
        <dbReference type="HAMAP-Rule" id="MF_00475"/>
    </source>
</evidence>
<protein>
    <recommendedName>
        <fullName evidence="1">Trp operon repressor homolog</fullName>
    </recommendedName>
</protein>